<sequence>MANHRIDRVGMEIKREVNDILQKKVRDPRVQGVTITEVQMQGDLSLAKVYYTIMSDLASDNQKAQTGLEKATGTIKRELGKQLTMYKIPDLVFEKDNSIAYGNKIDQLLRELDNKS</sequence>
<comment type="function">
    <text evidence="1">One of several proteins that assist in the late maturation steps of the functional core of the 30S ribosomal subunit. Associates with free 30S ribosomal subunits (but not with 30S subunits that are part of 70S ribosomes or polysomes). Required for efficient processing of 16S rRNA. May interact with the 5'-terminal helix region of 16S rRNA.</text>
</comment>
<comment type="subunit">
    <text evidence="1">Monomer. Binds 30S ribosomal subunits, but not 50S ribosomal subunits or 70S ribosomes.</text>
</comment>
<comment type="subcellular location">
    <subcellularLocation>
        <location evidence="1">Cytoplasm</location>
    </subcellularLocation>
</comment>
<comment type="similarity">
    <text evidence="1">Belongs to the RbfA family.</text>
</comment>
<comment type="sequence caution" evidence="2">
    <conflict type="erroneous initiation">
        <sequence resource="EMBL-CDS" id="ABF32597"/>
    </conflict>
    <text>Extended N-terminus.</text>
</comment>
<proteinExistence type="inferred from homology"/>
<evidence type="ECO:0000255" key="1">
    <source>
        <dbReference type="HAMAP-Rule" id="MF_00003"/>
    </source>
</evidence>
<evidence type="ECO:0000305" key="2"/>
<keyword id="KW-0963">Cytoplasm</keyword>
<keyword id="KW-0690">Ribosome biogenesis</keyword>
<gene>
    <name evidence="1" type="primary">rbfA</name>
    <name type="ordered locus">MGAS9429_Spy1410</name>
</gene>
<protein>
    <recommendedName>
        <fullName evidence="1">Ribosome-binding factor A</fullName>
    </recommendedName>
</protein>
<dbReference type="EMBL" id="CP000259">
    <property type="protein sequence ID" value="ABF32597.1"/>
    <property type="status" value="ALT_INIT"/>
    <property type="molecule type" value="Genomic_DNA"/>
</dbReference>
<dbReference type="RefSeq" id="WP_002988820.1">
    <property type="nucleotide sequence ID" value="NC_008021.1"/>
</dbReference>
<dbReference type="SMR" id="Q1JKH2"/>
<dbReference type="KEGG" id="spk:MGAS9429_Spy1410"/>
<dbReference type="HOGENOM" id="CLU_089475_3_0_9"/>
<dbReference type="Proteomes" id="UP000002433">
    <property type="component" value="Chromosome"/>
</dbReference>
<dbReference type="GO" id="GO:0005829">
    <property type="term" value="C:cytosol"/>
    <property type="evidence" value="ECO:0007669"/>
    <property type="project" value="TreeGrafter"/>
</dbReference>
<dbReference type="GO" id="GO:0043024">
    <property type="term" value="F:ribosomal small subunit binding"/>
    <property type="evidence" value="ECO:0007669"/>
    <property type="project" value="TreeGrafter"/>
</dbReference>
<dbReference type="GO" id="GO:0030490">
    <property type="term" value="P:maturation of SSU-rRNA"/>
    <property type="evidence" value="ECO:0007669"/>
    <property type="project" value="UniProtKB-UniRule"/>
</dbReference>
<dbReference type="Gene3D" id="3.30.300.20">
    <property type="match status" value="1"/>
</dbReference>
<dbReference type="HAMAP" id="MF_00003">
    <property type="entry name" value="RbfA"/>
    <property type="match status" value="1"/>
</dbReference>
<dbReference type="InterPro" id="IPR015946">
    <property type="entry name" value="KH_dom-like_a/b"/>
</dbReference>
<dbReference type="InterPro" id="IPR000238">
    <property type="entry name" value="RbfA"/>
</dbReference>
<dbReference type="InterPro" id="IPR023799">
    <property type="entry name" value="RbfA_dom_sf"/>
</dbReference>
<dbReference type="InterPro" id="IPR020053">
    <property type="entry name" value="Ribosome-bd_factorA_CS"/>
</dbReference>
<dbReference type="NCBIfam" id="TIGR00082">
    <property type="entry name" value="rbfA"/>
    <property type="match status" value="1"/>
</dbReference>
<dbReference type="PANTHER" id="PTHR33515">
    <property type="entry name" value="RIBOSOME-BINDING FACTOR A, CHLOROPLASTIC-RELATED"/>
    <property type="match status" value="1"/>
</dbReference>
<dbReference type="PANTHER" id="PTHR33515:SF1">
    <property type="entry name" value="RIBOSOME-BINDING FACTOR A, CHLOROPLASTIC-RELATED"/>
    <property type="match status" value="1"/>
</dbReference>
<dbReference type="Pfam" id="PF02033">
    <property type="entry name" value="RBFA"/>
    <property type="match status" value="1"/>
</dbReference>
<dbReference type="SUPFAM" id="SSF89919">
    <property type="entry name" value="Ribosome-binding factor A, RbfA"/>
    <property type="match status" value="1"/>
</dbReference>
<dbReference type="PROSITE" id="PS01319">
    <property type="entry name" value="RBFA"/>
    <property type="match status" value="1"/>
</dbReference>
<feature type="chain" id="PRO_0000321257" description="Ribosome-binding factor A">
    <location>
        <begin position="1"/>
        <end position="116"/>
    </location>
</feature>
<accession>Q1JKH2</accession>
<reference key="1">
    <citation type="journal article" date="2006" name="Proc. Natl. Acad. Sci. U.S.A.">
        <title>Molecular genetic anatomy of inter- and intraserotype variation in the human bacterial pathogen group A Streptococcus.</title>
        <authorList>
            <person name="Beres S.B."/>
            <person name="Richter E.W."/>
            <person name="Nagiec M.J."/>
            <person name="Sumby P."/>
            <person name="Porcella S.F."/>
            <person name="DeLeo F.R."/>
            <person name="Musser J.M."/>
        </authorList>
    </citation>
    <scope>NUCLEOTIDE SEQUENCE [LARGE SCALE GENOMIC DNA]</scope>
    <source>
        <strain>MGAS9429</strain>
    </source>
</reference>
<organism>
    <name type="scientific">Streptococcus pyogenes serotype M12 (strain MGAS9429)</name>
    <dbReference type="NCBI Taxonomy" id="370551"/>
    <lineage>
        <taxon>Bacteria</taxon>
        <taxon>Bacillati</taxon>
        <taxon>Bacillota</taxon>
        <taxon>Bacilli</taxon>
        <taxon>Lactobacillales</taxon>
        <taxon>Streptococcaceae</taxon>
        <taxon>Streptococcus</taxon>
    </lineage>
</organism>
<name>RBFA_STRPC</name>